<name>ISPE_MARMS</name>
<feature type="chain" id="PRO_0000335725" description="4-diphosphocytidyl-2-C-methyl-D-erythritol kinase">
    <location>
        <begin position="1"/>
        <end position="305"/>
    </location>
</feature>
<feature type="active site" evidence="1">
    <location>
        <position position="15"/>
    </location>
</feature>
<feature type="active site" evidence="1">
    <location>
        <position position="141"/>
    </location>
</feature>
<feature type="binding site" evidence="1">
    <location>
        <begin position="99"/>
        <end position="109"/>
    </location>
    <ligand>
        <name>ATP</name>
        <dbReference type="ChEBI" id="CHEBI:30616"/>
    </ligand>
</feature>
<proteinExistence type="inferred from homology"/>
<dbReference type="EC" id="2.7.1.148" evidence="1"/>
<dbReference type="EMBL" id="CP000749">
    <property type="protein sequence ID" value="ABR72505.1"/>
    <property type="molecule type" value="Genomic_DNA"/>
</dbReference>
<dbReference type="SMR" id="A6W1C6"/>
<dbReference type="STRING" id="400668.Mmwyl1_3603"/>
<dbReference type="KEGG" id="mmw:Mmwyl1_3603"/>
<dbReference type="eggNOG" id="COG1947">
    <property type="taxonomic scope" value="Bacteria"/>
</dbReference>
<dbReference type="HOGENOM" id="CLU_053057_3_0_6"/>
<dbReference type="OrthoDB" id="9809438at2"/>
<dbReference type="UniPathway" id="UPA00056">
    <property type="reaction ID" value="UER00094"/>
</dbReference>
<dbReference type="GO" id="GO:0050515">
    <property type="term" value="F:4-(cytidine 5'-diphospho)-2-C-methyl-D-erythritol kinase activity"/>
    <property type="evidence" value="ECO:0007669"/>
    <property type="project" value="UniProtKB-UniRule"/>
</dbReference>
<dbReference type="GO" id="GO:0005524">
    <property type="term" value="F:ATP binding"/>
    <property type="evidence" value="ECO:0007669"/>
    <property type="project" value="UniProtKB-UniRule"/>
</dbReference>
<dbReference type="GO" id="GO:0019288">
    <property type="term" value="P:isopentenyl diphosphate biosynthetic process, methylerythritol 4-phosphate pathway"/>
    <property type="evidence" value="ECO:0007669"/>
    <property type="project" value="UniProtKB-UniRule"/>
</dbReference>
<dbReference type="GO" id="GO:0016114">
    <property type="term" value="P:terpenoid biosynthetic process"/>
    <property type="evidence" value="ECO:0007669"/>
    <property type="project" value="InterPro"/>
</dbReference>
<dbReference type="Gene3D" id="3.30.230.10">
    <property type="match status" value="1"/>
</dbReference>
<dbReference type="Gene3D" id="3.30.70.890">
    <property type="entry name" value="GHMP kinase, C-terminal domain"/>
    <property type="match status" value="1"/>
</dbReference>
<dbReference type="HAMAP" id="MF_00061">
    <property type="entry name" value="IspE"/>
    <property type="match status" value="1"/>
</dbReference>
<dbReference type="InterPro" id="IPR013750">
    <property type="entry name" value="GHMP_kinase_C_dom"/>
</dbReference>
<dbReference type="InterPro" id="IPR036554">
    <property type="entry name" value="GHMP_kinase_C_sf"/>
</dbReference>
<dbReference type="InterPro" id="IPR006204">
    <property type="entry name" value="GHMP_kinase_N_dom"/>
</dbReference>
<dbReference type="InterPro" id="IPR004424">
    <property type="entry name" value="IspE"/>
</dbReference>
<dbReference type="InterPro" id="IPR020568">
    <property type="entry name" value="Ribosomal_Su5_D2-typ_SF"/>
</dbReference>
<dbReference type="InterPro" id="IPR014721">
    <property type="entry name" value="Ribsml_uS5_D2-typ_fold_subgr"/>
</dbReference>
<dbReference type="NCBIfam" id="TIGR00154">
    <property type="entry name" value="ispE"/>
    <property type="match status" value="1"/>
</dbReference>
<dbReference type="PANTHER" id="PTHR43527">
    <property type="entry name" value="4-DIPHOSPHOCYTIDYL-2-C-METHYL-D-ERYTHRITOL KINASE, CHLOROPLASTIC"/>
    <property type="match status" value="1"/>
</dbReference>
<dbReference type="PANTHER" id="PTHR43527:SF2">
    <property type="entry name" value="4-DIPHOSPHOCYTIDYL-2-C-METHYL-D-ERYTHRITOL KINASE, CHLOROPLASTIC"/>
    <property type="match status" value="1"/>
</dbReference>
<dbReference type="Pfam" id="PF08544">
    <property type="entry name" value="GHMP_kinases_C"/>
    <property type="match status" value="1"/>
</dbReference>
<dbReference type="Pfam" id="PF00288">
    <property type="entry name" value="GHMP_kinases_N"/>
    <property type="match status" value="1"/>
</dbReference>
<dbReference type="PIRSF" id="PIRSF010376">
    <property type="entry name" value="IspE"/>
    <property type="match status" value="1"/>
</dbReference>
<dbReference type="SUPFAM" id="SSF55060">
    <property type="entry name" value="GHMP Kinase, C-terminal domain"/>
    <property type="match status" value="1"/>
</dbReference>
<dbReference type="SUPFAM" id="SSF54211">
    <property type="entry name" value="Ribosomal protein S5 domain 2-like"/>
    <property type="match status" value="1"/>
</dbReference>
<reference key="1">
    <citation type="submission" date="2007-06" db="EMBL/GenBank/DDBJ databases">
        <title>Complete sequence of Marinomonas sp. MWYL1.</title>
        <authorList>
            <consortium name="US DOE Joint Genome Institute"/>
            <person name="Copeland A."/>
            <person name="Lucas S."/>
            <person name="Lapidus A."/>
            <person name="Barry K."/>
            <person name="Glavina del Rio T."/>
            <person name="Dalin E."/>
            <person name="Tice H."/>
            <person name="Pitluck S."/>
            <person name="Kiss H."/>
            <person name="Brettin T."/>
            <person name="Bruce D."/>
            <person name="Detter J.C."/>
            <person name="Han C."/>
            <person name="Schmutz J."/>
            <person name="Larimer F."/>
            <person name="Land M."/>
            <person name="Hauser L."/>
            <person name="Kyrpides N."/>
            <person name="Kim E."/>
            <person name="Johnston A.W.B."/>
            <person name="Todd J.D."/>
            <person name="Rogers R."/>
            <person name="Wexler M."/>
            <person name="Bond P.L."/>
            <person name="Li Y."/>
            <person name="Richardson P."/>
        </authorList>
    </citation>
    <scope>NUCLEOTIDE SEQUENCE [LARGE SCALE GENOMIC DNA]</scope>
    <source>
        <strain>MWYL1</strain>
    </source>
</reference>
<sequence>MDYSVNKMQLPSPAKLNLFLHITGRREDGYHELQTLFQFIDLCDTLDFSLTRNNQITISPIIEQLPTEDNLIYKAAKLLTPFKKDSTFGIDIILTKQLPMGGGIGGGSSNAATALLALNVLWGCQLSLEKLAELGVQLGADIPVFVMGFAAFAEGVGEKLQKVELDTPYFLLIKPNCHVSTGQIFTDKYLTRDTPPIRISHALKLGGHNDCLDVVKKHNPEVNEAYLWLKNYGDAKLTGTGACLFLAFDNLRDAERVRSSTPTKWQSWVCRGCNTSPTHAALNQWIEQNRGVPHIKHHLSQSFLG</sequence>
<comment type="function">
    <text evidence="1">Catalyzes the phosphorylation of the position 2 hydroxy group of 4-diphosphocytidyl-2C-methyl-D-erythritol.</text>
</comment>
<comment type="catalytic activity">
    <reaction evidence="1">
        <text>4-CDP-2-C-methyl-D-erythritol + ATP = 4-CDP-2-C-methyl-D-erythritol 2-phosphate + ADP + H(+)</text>
        <dbReference type="Rhea" id="RHEA:18437"/>
        <dbReference type="ChEBI" id="CHEBI:15378"/>
        <dbReference type="ChEBI" id="CHEBI:30616"/>
        <dbReference type="ChEBI" id="CHEBI:57823"/>
        <dbReference type="ChEBI" id="CHEBI:57919"/>
        <dbReference type="ChEBI" id="CHEBI:456216"/>
        <dbReference type="EC" id="2.7.1.148"/>
    </reaction>
</comment>
<comment type="pathway">
    <text evidence="1">Isoprenoid biosynthesis; isopentenyl diphosphate biosynthesis via DXP pathway; isopentenyl diphosphate from 1-deoxy-D-xylulose 5-phosphate: step 3/6.</text>
</comment>
<comment type="similarity">
    <text evidence="1">Belongs to the GHMP kinase family. IspE subfamily.</text>
</comment>
<evidence type="ECO:0000255" key="1">
    <source>
        <dbReference type="HAMAP-Rule" id="MF_00061"/>
    </source>
</evidence>
<organism>
    <name type="scientific">Marinomonas sp. (strain MWYL1)</name>
    <dbReference type="NCBI Taxonomy" id="400668"/>
    <lineage>
        <taxon>Bacteria</taxon>
        <taxon>Pseudomonadati</taxon>
        <taxon>Pseudomonadota</taxon>
        <taxon>Gammaproteobacteria</taxon>
        <taxon>Oceanospirillales</taxon>
        <taxon>Oceanospirillaceae</taxon>
        <taxon>Marinomonas</taxon>
    </lineage>
</organism>
<accession>A6W1C6</accession>
<gene>
    <name evidence="1" type="primary">ispE</name>
    <name type="ordered locus">Mmwyl1_3603</name>
</gene>
<protein>
    <recommendedName>
        <fullName evidence="1">4-diphosphocytidyl-2-C-methyl-D-erythritol kinase</fullName>
        <shortName evidence="1">CMK</shortName>
        <ecNumber evidence="1">2.7.1.148</ecNumber>
    </recommendedName>
    <alternativeName>
        <fullName evidence="1">4-(cytidine-5'-diphospho)-2-C-methyl-D-erythritol kinase</fullName>
    </alternativeName>
</protein>
<keyword id="KW-0067">ATP-binding</keyword>
<keyword id="KW-0414">Isoprene biosynthesis</keyword>
<keyword id="KW-0418">Kinase</keyword>
<keyword id="KW-0547">Nucleotide-binding</keyword>
<keyword id="KW-0808">Transferase</keyword>